<feature type="chain" id="PRO_0000358254" description="NAD(P)H-quinone oxidoreductase subunit J, chloroplastic">
    <location>
        <begin position="1"/>
        <end position="158"/>
    </location>
</feature>
<protein>
    <recommendedName>
        <fullName evidence="1">NAD(P)H-quinone oxidoreductase subunit J, chloroplastic</fullName>
        <ecNumber evidence="1">7.1.1.-</ecNumber>
    </recommendedName>
    <alternativeName>
        <fullName>NAD(P)H dehydrogenase subunit J</fullName>
    </alternativeName>
    <alternativeName>
        <fullName evidence="1">NADH-plastoquinone oxidoreductase subunit J</fullName>
    </alternativeName>
</protein>
<dbReference type="EC" id="7.1.1.-" evidence="1"/>
<dbReference type="EMBL" id="EU835853">
    <property type="protein sequence ID" value="ACH41059.1"/>
    <property type="molecule type" value="Genomic_DNA"/>
</dbReference>
<dbReference type="RefSeq" id="YP_002149722.1">
    <property type="nucleotide sequence ID" value="NC_011163.1"/>
</dbReference>
<dbReference type="SMR" id="B5LML3"/>
<dbReference type="PaxDb" id="3827-XP_004488921.1"/>
<dbReference type="GeneID" id="6797558"/>
<dbReference type="KEGG" id="cam:6797558"/>
<dbReference type="eggNOG" id="KOG1687">
    <property type="taxonomic scope" value="Eukaryota"/>
</dbReference>
<dbReference type="eggNOG" id="KOG1713">
    <property type="taxonomic scope" value="Eukaryota"/>
</dbReference>
<dbReference type="OrthoDB" id="1909959at2759"/>
<dbReference type="Proteomes" id="UP000087171">
    <property type="component" value="Chloroplast Pltd"/>
</dbReference>
<dbReference type="GO" id="GO:0009535">
    <property type="term" value="C:chloroplast thylakoid membrane"/>
    <property type="evidence" value="ECO:0007669"/>
    <property type="project" value="UniProtKB-SubCell"/>
</dbReference>
<dbReference type="GO" id="GO:0008137">
    <property type="term" value="F:NADH dehydrogenase (ubiquinone) activity"/>
    <property type="evidence" value="ECO:0007669"/>
    <property type="project" value="InterPro"/>
</dbReference>
<dbReference type="GO" id="GO:0048038">
    <property type="term" value="F:quinone binding"/>
    <property type="evidence" value="ECO:0007669"/>
    <property type="project" value="UniProtKB-KW"/>
</dbReference>
<dbReference type="GO" id="GO:0019684">
    <property type="term" value="P:photosynthesis, light reaction"/>
    <property type="evidence" value="ECO:0007669"/>
    <property type="project" value="UniProtKB-UniRule"/>
</dbReference>
<dbReference type="FunFam" id="3.30.460.80:FF:000004">
    <property type="entry name" value="NAD(P)H-quinone oxidoreductase subunit J, chloroplastic"/>
    <property type="match status" value="1"/>
</dbReference>
<dbReference type="Gene3D" id="3.30.460.80">
    <property type="entry name" value="NADH:ubiquinone oxidoreductase, 30kDa subunit"/>
    <property type="match status" value="1"/>
</dbReference>
<dbReference type="HAMAP" id="MF_01357">
    <property type="entry name" value="NDH1_NuoC"/>
    <property type="match status" value="1"/>
</dbReference>
<dbReference type="InterPro" id="IPR010218">
    <property type="entry name" value="NADH_DH_suC"/>
</dbReference>
<dbReference type="InterPro" id="IPR037232">
    <property type="entry name" value="NADH_quin_OxRdtase_su_C/D-like"/>
</dbReference>
<dbReference type="InterPro" id="IPR001268">
    <property type="entry name" value="NADH_UbQ_OxRdtase_30kDa_su"/>
</dbReference>
<dbReference type="InterPro" id="IPR020396">
    <property type="entry name" value="NADH_UbQ_OxRdtase_CS"/>
</dbReference>
<dbReference type="NCBIfam" id="NF009141">
    <property type="entry name" value="PRK12494.1"/>
    <property type="match status" value="1"/>
</dbReference>
<dbReference type="PANTHER" id="PTHR10884:SF14">
    <property type="entry name" value="NADH DEHYDROGENASE [UBIQUINONE] IRON-SULFUR PROTEIN 3, MITOCHONDRIAL"/>
    <property type="match status" value="1"/>
</dbReference>
<dbReference type="PANTHER" id="PTHR10884">
    <property type="entry name" value="NADH DEHYDROGENASE UBIQUINONE IRON-SULFUR PROTEIN 3"/>
    <property type="match status" value="1"/>
</dbReference>
<dbReference type="Pfam" id="PF00329">
    <property type="entry name" value="Complex1_30kDa"/>
    <property type="match status" value="1"/>
</dbReference>
<dbReference type="SUPFAM" id="SSF143243">
    <property type="entry name" value="Nqo5-like"/>
    <property type="match status" value="1"/>
</dbReference>
<dbReference type="PROSITE" id="PS00542">
    <property type="entry name" value="COMPLEX1_30K"/>
    <property type="match status" value="1"/>
</dbReference>
<organism>
    <name type="scientific">Cicer arietinum</name>
    <name type="common">Chickpea</name>
    <name type="synonym">Garbanzo</name>
    <dbReference type="NCBI Taxonomy" id="3827"/>
    <lineage>
        <taxon>Eukaryota</taxon>
        <taxon>Viridiplantae</taxon>
        <taxon>Streptophyta</taxon>
        <taxon>Embryophyta</taxon>
        <taxon>Tracheophyta</taxon>
        <taxon>Spermatophyta</taxon>
        <taxon>Magnoliopsida</taxon>
        <taxon>eudicotyledons</taxon>
        <taxon>Gunneridae</taxon>
        <taxon>Pentapetalae</taxon>
        <taxon>rosids</taxon>
        <taxon>fabids</taxon>
        <taxon>Fabales</taxon>
        <taxon>Fabaceae</taxon>
        <taxon>Papilionoideae</taxon>
        <taxon>50 kb inversion clade</taxon>
        <taxon>NPAAA clade</taxon>
        <taxon>Hologalegina</taxon>
        <taxon>IRL clade</taxon>
        <taxon>Cicereae</taxon>
        <taxon>Cicer</taxon>
    </lineage>
</organism>
<name>NDHJ_CICAR</name>
<geneLocation type="chloroplast"/>
<comment type="function">
    <text evidence="1">NDH shuttles electrons from NAD(P)H:plastoquinone, via FMN and iron-sulfur (Fe-S) centers, to quinones in the photosynthetic chain and possibly in a chloroplast respiratory chain. The immediate electron acceptor for the enzyme in this species is believed to be plastoquinone. Couples the redox reaction to proton translocation, and thus conserves the redox energy in a proton gradient.</text>
</comment>
<comment type="catalytic activity">
    <reaction evidence="1">
        <text>a plastoquinone + NADH + (n+1) H(+)(in) = a plastoquinol + NAD(+) + n H(+)(out)</text>
        <dbReference type="Rhea" id="RHEA:42608"/>
        <dbReference type="Rhea" id="RHEA-COMP:9561"/>
        <dbReference type="Rhea" id="RHEA-COMP:9562"/>
        <dbReference type="ChEBI" id="CHEBI:15378"/>
        <dbReference type="ChEBI" id="CHEBI:17757"/>
        <dbReference type="ChEBI" id="CHEBI:57540"/>
        <dbReference type="ChEBI" id="CHEBI:57945"/>
        <dbReference type="ChEBI" id="CHEBI:62192"/>
    </reaction>
</comment>
<comment type="catalytic activity">
    <reaction evidence="1">
        <text>a plastoquinone + NADPH + (n+1) H(+)(in) = a plastoquinol + NADP(+) + n H(+)(out)</text>
        <dbReference type="Rhea" id="RHEA:42612"/>
        <dbReference type="Rhea" id="RHEA-COMP:9561"/>
        <dbReference type="Rhea" id="RHEA-COMP:9562"/>
        <dbReference type="ChEBI" id="CHEBI:15378"/>
        <dbReference type="ChEBI" id="CHEBI:17757"/>
        <dbReference type="ChEBI" id="CHEBI:57783"/>
        <dbReference type="ChEBI" id="CHEBI:58349"/>
        <dbReference type="ChEBI" id="CHEBI:62192"/>
    </reaction>
</comment>
<comment type="subunit">
    <text evidence="1">NDH is composed of at least 16 different subunits, 5 of which are encoded in the nucleus.</text>
</comment>
<comment type="subcellular location">
    <subcellularLocation>
        <location evidence="1">Plastid</location>
        <location evidence="1">Chloroplast thylakoid membrane</location>
        <topology evidence="1">Peripheral membrane protein</topology>
        <orientation evidence="1">Stromal side</orientation>
    </subcellularLocation>
</comment>
<comment type="similarity">
    <text evidence="1">Belongs to the complex I 30 kDa subunit family.</text>
</comment>
<evidence type="ECO:0000255" key="1">
    <source>
        <dbReference type="HAMAP-Rule" id="MF_01357"/>
    </source>
</evidence>
<keyword id="KW-0150">Chloroplast</keyword>
<keyword id="KW-0472">Membrane</keyword>
<keyword id="KW-0520">NAD</keyword>
<keyword id="KW-0521">NADP</keyword>
<keyword id="KW-0934">Plastid</keyword>
<keyword id="KW-0618">Plastoquinone</keyword>
<keyword id="KW-0874">Quinone</keyword>
<keyword id="KW-1185">Reference proteome</keyword>
<keyword id="KW-0793">Thylakoid</keyword>
<keyword id="KW-1278">Translocase</keyword>
<keyword id="KW-0813">Transport</keyword>
<reference key="1">
    <citation type="journal article" date="2008" name="Mol. Phylogenet. Evol.">
        <title>Complete plastid genome sequence of the chickpea (Cicer arietinum) and the phylogenetic distribution of rps12 and clpP intron losses among legumes (Leguminosae).</title>
        <authorList>
            <person name="Jansen R.K."/>
            <person name="Wojciechowski M.F."/>
            <person name="Sanniyasi E."/>
            <person name="Lee S.-B."/>
            <person name="Daniell H."/>
        </authorList>
    </citation>
    <scope>NUCLEOTIDE SEQUENCE [LARGE SCALE GENOMIC DNA]</scope>
</reference>
<accession>B5LML3</accession>
<gene>
    <name evidence="1" type="primary">ndhJ</name>
</gene>
<proteinExistence type="inferred from homology"/>
<sequence>MQGNLSAWLVKHGIVHRSLGFDYQGIETLQIKPEDWHSIAVILYVYGYNYLRSQCAYDVAPGGLLASVYHLTRIEYSLDQPEEVCIKVFAPRKNPRIPSIFWVWKSADFQERESYDMLGISYDNHPRLKRILMPESWIGWPLRKDYIAPNFYEIQDAH</sequence>